<protein>
    <recommendedName>
        <fullName evidence="5">Protein FIP1</fullName>
    </recommendedName>
    <alternativeName>
        <fullName evidence="4">FRIGIDA-interacting protein 1</fullName>
    </alternativeName>
</protein>
<comment type="subunit">
    <text evidence="3">Interacts with FRI.</text>
</comment>
<comment type="subcellular location">
    <subcellularLocation>
        <location evidence="1">Membrane</location>
        <topology evidence="1">Multi-pass membrane protein</topology>
    </subcellularLocation>
</comment>
<comment type="disruption phenotype">
    <text evidence="3">No visible phenotype under normal growth conditions.</text>
</comment>
<comment type="similarity">
    <text evidence="5">Belongs to the TMEM192 family.</text>
</comment>
<feature type="chain" id="PRO_0000443508" description="Protein FIP1">
    <location>
        <begin position="1"/>
        <end position="355"/>
    </location>
</feature>
<feature type="transmembrane region" description="Helical" evidence="1">
    <location>
        <begin position="42"/>
        <end position="62"/>
    </location>
</feature>
<feature type="transmembrane region" description="Helical" evidence="1">
    <location>
        <begin position="72"/>
        <end position="92"/>
    </location>
</feature>
<feature type="transmembrane region" description="Helical" evidence="1">
    <location>
        <begin position="113"/>
        <end position="133"/>
    </location>
</feature>
<feature type="transmembrane region" description="Helical" evidence="1">
    <location>
        <begin position="149"/>
        <end position="169"/>
    </location>
</feature>
<feature type="region of interest" description="Disordered" evidence="2">
    <location>
        <begin position="331"/>
        <end position="355"/>
    </location>
</feature>
<feature type="coiled-coil region" evidence="1">
    <location>
        <begin position="220"/>
        <end position="337"/>
    </location>
</feature>
<feature type="compositionally biased region" description="Basic and acidic residues" evidence="2">
    <location>
        <begin position="331"/>
        <end position="340"/>
    </location>
</feature>
<sequence length="355" mass="40586">MSTERRASSNPMTNEENAMFLDILHEAPLFGHRKSRSLVGSYLYMLLLAGYAILAAGAPWMFHRVQQLTPSLLCCCDVALLVVTGVFQQYFVYQVQKIRLQGYYSFSQKLKHVVRLPFAIAAYGTAAMLLVIVWRPQIHILSISSLQRIIMLVEAVGAGFFMGLYIGYVHQYNSVNSRPDVLKSLYSPLQPSSSMEGLRYYEGRLSDQQTALLQYQRENLHFLSEEILCLQEKLSKYEQSDDGSTPQVDLAHLLAARDQELRTLSAEMNQLQSELRLARSLIAERDAEVQRVNSTNNQYIEENERLRAILSEWSMRAANLERALEVERMSNSELQKEVASTRRKQMLETTTSEQP</sequence>
<dbReference type="EMBL" id="AC005970">
    <property type="protein sequence ID" value="AAM15099.1"/>
    <property type="molecule type" value="Genomic_DNA"/>
</dbReference>
<dbReference type="EMBL" id="CP002685">
    <property type="protein sequence ID" value="AEC05993.1"/>
    <property type="molecule type" value="Genomic_DNA"/>
</dbReference>
<dbReference type="EMBL" id="AY086482">
    <property type="protein sequence ID" value="AAM63484.1"/>
    <property type="molecule type" value="mRNA"/>
</dbReference>
<dbReference type="RefSeq" id="NP_565332.1">
    <property type="nucleotide sequence ID" value="NM_126614.3"/>
</dbReference>
<dbReference type="SMR" id="Q8S8K9"/>
<dbReference type="FunCoup" id="Q8S8K9">
    <property type="interactions" value="124"/>
</dbReference>
<dbReference type="IntAct" id="Q8S8K9">
    <property type="interactions" value="1"/>
</dbReference>
<dbReference type="STRING" id="3702.Q8S8K9"/>
<dbReference type="PaxDb" id="3702-AT2G06005.1"/>
<dbReference type="ProteomicsDB" id="228946"/>
<dbReference type="EnsemblPlants" id="AT2G06005.1">
    <property type="protein sequence ID" value="AT2G06005.1"/>
    <property type="gene ID" value="AT2G06005"/>
</dbReference>
<dbReference type="GeneID" id="815154"/>
<dbReference type="Gramene" id="AT2G06005.1">
    <property type="protein sequence ID" value="AT2G06005.1"/>
    <property type="gene ID" value="AT2G06005"/>
</dbReference>
<dbReference type="KEGG" id="ath:AT2G06005"/>
<dbReference type="Araport" id="AT2G06005"/>
<dbReference type="TAIR" id="AT2G06005">
    <property type="gene designation" value="FIP1"/>
</dbReference>
<dbReference type="eggNOG" id="ENOG502QT7U">
    <property type="taxonomic scope" value="Eukaryota"/>
</dbReference>
<dbReference type="InParanoid" id="Q8S8K9"/>
<dbReference type="OMA" id="VMVWKPH"/>
<dbReference type="PhylomeDB" id="Q8S8K9"/>
<dbReference type="PRO" id="PR:Q8S8K9"/>
<dbReference type="Proteomes" id="UP000006548">
    <property type="component" value="Chromosome 2"/>
</dbReference>
<dbReference type="ExpressionAtlas" id="Q8S8K9">
    <property type="expression patterns" value="baseline and differential"/>
</dbReference>
<dbReference type="GO" id="GO:0016020">
    <property type="term" value="C:membrane"/>
    <property type="evidence" value="ECO:0007669"/>
    <property type="project" value="UniProtKB-SubCell"/>
</dbReference>
<dbReference type="InterPro" id="IPR029399">
    <property type="entry name" value="TMEM192"/>
</dbReference>
<dbReference type="PANTHER" id="PTHR31592">
    <property type="entry name" value="TRANSMEMBRANE PROTEIN 192"/>
    <property type="match status" value="1"/>
</dbReference>
<dbReference type="PANTHER" id="PTHR31592:SF1">
    <property type="entry name" value="TRANSMEMBRANE PROTEIN 192"/>
    <property type="match status" value="1"/>
</dbReference>
<dbReference type="Pfam" id="PF14802">
    <property type="entry name" value="TMEM192"/>
    <property type="match status" value="1"/>
</dbReference>
<reference key="1">
    <citation type="journal article" date="1999" name="Nature">
        <title>Sequence and analysis of chromosome 2 of the plant Arabidopsis thaliana.</title>
        <authorList>
            <person name="Lin X."/>
            <person name="Kaul S."/>
            <person name="Rounsley S.D."/>
            <person name="Shea T.P."/>
            <person name="Benito M.-I."/>
            <person name="Town C.D."/>
            <person name="Fujii C.Y."/>
            <person name="Mason T.M."/>
            <person name="Bowman C.L."/>
            <person name="Barnstead M.E."/>
            <person name="Feldblyum T.V."/>
            <person name="Buell C.R."/>
            <person name="Ketchum K.A."/>
            <person name="Lee J.J."/>
            <person name="Ronning C.M."/>
            <person name="Koo H.L."/>
            <person name="Moffat K.S."/>
            <person name="Cronin L.A."/>
            <person name="Shen M."/>
            <person name="Pai G."/>
            <person name="Van Aken S."/>
            <person name="Umayam L."/>
            <person name="Tallon L.J."/>
            <person name="Gill J.E."/>
            <person name="Adams M.D."/>
            <person name="Carrera A.J."/>
            <person name="Creasy T.H."/>
            <person name="Goodman H.M."/>
            <person name="Somerville C.R."/>
            <person name="Copenhaver G.P."/>
            <person name="Preuss D."/>
            <person name="Nierman W.C."/>
            <person name="White O."/>
            <person name="Eisen J.A."/>
            <person name="Salzberg S.L."/>
            <person name="Fraser C.M."/>
            <person name="Venter J.C."/>
        </authorList>
    </citation>
    <scope>NUCLEOTIDE SEQUENCE [LARGE SCALE GENOMIC DNA]</scope>
    <source>
        <strain>cv. Columbia</strain>
    </source>
</reference>
<reference key="2">
    <citation type="journal article" date="2017" name="Plant J.">
        <title>Araport11: a complete reannotation of the Arabidopsis thaliana reference genome.</title>
        <authorList>
            <person name="Cheng C.Y."/>
            <person name="Krishnakumar V."/>
            <person name="Chan A.P."/>
            <person name="Thibaud-Nissen F."/>
            <person name="Schobel S."/>
            <person name="Town C.D."/>
        </authorList>
    </citation>
    <scope>GENOME REANNOTATION</scope>
    <source>
        <strain>cv. Columbia</strain>
    </source>
</reference>
<reference key="3">
    <citation type="submission" date="2002-03" db="EMBL/GenBank/DDBJ databases">
        <title>Full-length cDNA from Arabidopsis thaliana.</title>
        <authorList>
            <person name="Brover V.V."/>
            <person name="Troukhan M.E."/>
            <person name="Alexandrov N.A."/>
            <person name="Lu Y.-P."/>
            <person name="Flavell R.B."/>
            <person name="Feldmann K.A."/>
        </authorList>
    </citation>
    <scope>NUCLEOTIDE SEQUENCE [LARGE SCALE MRNA]</scope>
</reference>
<reference key="4">
    <citation type="journal article" date="2009" name="Plant Physiol.">
        <title>FRIGIDA delays flowering in Arabidopsis via a cotranscriptional mechanism involving direct interaction with the nuclear cap-binding complex.</title>
        <authorList>
            <person name="Geraldo N."/>
            <person name="Baeurle I."/>
            <person name="Kidou S."/>
            <person name="Hu X."/>
            <person name="Dean C."/>
        </authorList>
    </citation>
    <scope>INTERACTION WITH FRI</scope>
    <scope>DISRUPTION PHENOTYPE</scope>
</reference>
<keyword id="KW-0175">Coiled coil</keyword>
<keyword id="KW-0472">Membrane</keyword>
<keyword id="KW-1185">Reference proteome</keyword>
<keyword id="KW-0812">Transmembrane</keyword>
<keyword id="KW-1133">Transmembrane helix</keyword>
<name>FRIP1_ARATH</name>
<proteinExistence type="evidence at protein level"/>
<organism>
    <name type="scientific">Arabidopsis thaliana</name>
    <name type="common">Mouse-ear cress</name>
    <dbReference type="NCBI Taxonomy" id="3702"/>
    <lineage>
        <taxon>Eukaryota</taxon>
        <taxon>Viridiplantae</taxon>
        <taxon>Streptophyta</taxon>
        <taxon>Embryophyta</taxon>
        <taxon>Tracheophyta</taxon>
        <taxon>Spermatophyta</taxon>
        <taxon>Magnoliopsida</taxon>
        <taxon>eudicotyledons</taxon>
        <taxon>Gunneridae</taxon>
        <taxon>Pentapetalae</taxon>
        <taxon>rosids</taxon>
        <taxon>malvids</taxon>
        <taxon>Brassicales</taxon>
        <taxon>Brassicaceae</taxon>
        <taxon>Camelineae</taxon>
        <taxon>Arabidopsis</taxon>
    </lineage>
</organism>
<evidence type="ECO:0000255" key="1"/>
<evidence type="ECO:0000256" key="2">
    <source>
        <dbReference type="SAM" id="MobiDB-lite"/>
    </source>
</evidence>
<evidence type="ECO:0000269" key="3">
    <source>
    </source>
</evidence>
<evidence type="ECO:0000303" key="4">
    <source>
    </source>
</evidence>
<evidence type="ECO:0000305" key="5"/>
<evidence type="ECO:0000312" key="6">
    <source>
        <dbReference type="Araport" id="AT2G06005"/>
    </source>
</evidence>
<gene>
    <name evidence="4" type="primary">FIP1</name>
    <name evidence="6" type="ordered locus">At2g06005</name>
</gene>
<accession>Q8S8K9</accession>